<name>GOG8B_HUMAN</name>
<protein>
    <recommendedName>
        <fullName>Golgin subfamily A member 8B</fullName>
    </recommendedName>
    <alternativeName>
        <fullName>Golgin-67</fullName>
    </alternativeName>
</protein>
<dbReference type="EMBL" id="AF164622">
    <property type="protein sequence ID" value="AAF40308.1"/>
    <property type="molecule type" value="mRNA"/>
</dbReference>
<dbReference type="EMBL" id="AF163441">
    <property type="protein sequence ID" value="AAF34136.1"/>
    <property type="molecule type" value="mRNA"/>
</dbReference>
<dbReference type="EMBL" id="AC027139">
    <property type="status" value="NOT_ANNOTATED_CDS"/>
    <property type="molecule type" value="Genomic_DNA"/>
</dbReference>
<dbReference type="EMBL" id="BC104800">
    <property type="protein sequence ID" value="AAI04801.1"/>
    <property type="molecule type" value="mRNA"/>
</dbReference>
<dbReference type="CCDS" id="CCDS45211.1">
    <molecule id="A8MQT2-1"/>
</dbReference>
<dbReference type="RefSeq" id="NP_001018861.3">
    <molecule id="A8MQT2-1"/>
    <property type="nucleotide sequence ID" value="NM_001023567.5"/>
</dbReference>
<dbReference type="RefSeq" id="XP_011519898.1">
    <property type="nucleotide sequence ID" value="XM_011521596.1"/>
</dbReference>
<dbReference type="RefSeq" id="XP_011519899.1">
    <property type="nucleotide sequence ID" value="XM_011521597.1"/>
</dbReference>
<dbReference type="RefSeq" id="XP_016877699.1">
    <property type="nucleotide sequence ID" value="XM_017022210.1"/>
</dbReference>
<dbReference type="RefSeq" id="XP_016877700.1">
    <property type="nucleotide sequence ID" value="XM_017022211.1"/>
</dbReference>
<dbReference type="RefSeq" id="XP_016877701.1">
    <property type="nucleotide sequence ID" value="XM_017022212.1"/>
</dbReference>
<dbReference type="RefSeq" id="XP_016877702.1">
    <property type="nucleotide sequence ID" value="XM_017022213.1"/>
</dbReference>
<dbReference type="RefSeq" id="XP_016877704.1">
    <property type="nucleotide sequence ID" value="XM_017022215.1"/>
</dbReference>
<dbReference type="RefSeq" id="XP_016877705.1">
    <property type="nucleotide sequence ID" value="XM_017022216.1"/>
</dbReference>
<dbReference type="RefSeq" id="XP_016877706.1">
    <property type="nucleotide sequence ID" value="XM_017022217.1"/>
</dbReference>
<dbReference type="RefSeq" id="XP_016877707.1">
    <property type="nucleotide sequence ID" value="XM_017022218.1"/>
</dbReference>
<dbReference type="SMR" id="A8MQT2"/>
<dbReference type="BioGRID" id="136421">
    <property type="interactions" value="4"/>
</dbReference>
<dbReference type="FunCoup" id="A8MQT2">
    <property type="interactions" value="188"/>
</dbReference>
<dbReference type="IntAct" id="A8MQT2">
    <property type="interactions" value="1"/>
</dbReference>
<dbReference type="STRING" id="9606.ENSP00000343064"/>
<dbReference type="GlyConnect" id="1283">
    <property type="glycosylation" value="3 N-Linked glycans (1 site)"/>
</dbReference>
<dbReference type="GlyCosmos" id="A8MQT2">
    <property type="glycosylation" value="1 site, 3 glycans"/>
</dbReference>
<dbReference type="GlyGen" id="A8MQT2">
    <property type="glycosylation" value="1 site, 3 N-linked glycans (1 site)"/>
</dbReference>
<dbReference type="iPTMnet" id="A8MQT2"/>
<dbReference type="PhosphoSitePlus" id="A8MQT2"/>
<dbReference type="BioMuta" id="GOLGA8B"/>
<dbReference type="jPOST" id="A8MQT2"/>
<dbReference type="MassIVE" id="A8MQT2"/>
<dbReference type="PaxDb" id="9606-ENSP00000343064"/>
<dbReference type="PeptideAtlas" id="A8MQT2"/>
<dbReference type="Antibodypedia" id="67287">
    <property type="antibodies" value="63 antibodies from 11 providers"/>
</dbReference>
<dbReference type="DNASU" id="440270"/>
<dbReference type="Ensembl" id="ENST00000342314.9">
    <molecule id="A8MQT2-1"/>
    <property type="protein sequence ID" value="ENSP00000343064.5"/>
    <property type="gene ID" value="ENSG00000215252.12"/>
</dbReference>
<dbReference type="Ensembl" id="ENST00000683415.1">
    <molecule id="A8MQT2-1"/>
    <property type="protein sequence ID" value="ENSP00000507830.1"/>
    <property type="gene ID" value="ENSG00000215252.12"/>
</dbReference>
<dbReference type="GeneID" id="440270"/>
<dbReference type="KEGG" id="hsa:440270"/>
<dbReference type="MANE-Select" id="ENST00000683415.1">
    <property type="protein sequence ID" value="ENSP00000507830.1"/>
    <property type="RefSeq nucleotide sequence ID" value="NM_001023567.5"/>
    <property type="RefSeq protein sequence ID" value="NP_001018861.3"/>
</dbReference>
<dbReference type="UCSC" id="uc001ziq.4">
    <molecule id="A8MQT2-1"/>
    <property type="organism name" value="human"/>
</dbReference>
<dbReference type="AGR" id="HGNC:31973"/>
<dbReference type="CTD" id="440270"/>
<dbReference type="DisGeNET" id="440270"/>
<dbReference type="GeneCards" id="GOLGA8B"/>
<dbReference type="HGNC" id="HGNC:31973">
    <property type="gene designation" value="GOLGA8B"/>
</dbReference>
<dbReference type="HPA" id="ENSG00000215252">
    <property type="expression patterns" value="Tissue enhanced (pancreas)"/>
</dbReference>
<dbReference type="MIM" id="609619">
    <property type="type" value="gene"/>
</dbReference>
<dbReference type="neXtProt" id="NX_A8MQT2"/>
<dbReference type="OpenTargets" id="ENSG00000215252"/>
<dbReference type="PharmGKB" id="PA142671717"/>
<dbReference type="VEuPathDB" id="HostDB:ENSG00000215252"/>
<dbReference type="eggNOG" id="KOG4725">
    <property type="taxonomic scope" value="Eukaryota"/>
</dbReference>
<dbReference type="GeneTree" id="ENSGT00530000062932"/>
<dbReference type="HOGENOM" id="CLU_012403_1_2_1"/>
<dbReference type="InParanoid" id="A8MQT2"/>
<dbReference type="OMA" id="DMHRVEK"/>
<dbReference type="OrthoDB" id="5978643at2759"/>
<dbReference type="PAN-GO" id="A8MQT2">
    <property type="GO annotations" value="5 GO annotations based on evolutionary models"/>
</dbReference>
<dbReference type="PhylomeDB" id="A8MQT2"/>
<dbReference type="TreeFam" id="TF316990"/>
<dbReference type="PathwayCommons" id="A8MQT2"/>
<dbReference type="SignaLink" id="A8MQT2"/>
<dbReference type="BioGRID-ORCS" id="440270">
    <property type="hits" value="9 hits in 642 CRISPR screens"/>
</dbReference>
<dbReference type="ChiTaRS" id="GOLGA8B">
    <property type="organism name" value="human"/>
</dbReference>
<dbReference type="GenomeRNAi" id="440270"/>
<dbReference type="Pharos" id="A8MQT2">
    <property type="development level" value="Tdark"/>
</dbReference>
<dbReference type="PRO" id="PR:A8MQT2"/>
<dbReference type="Proteomes" id="UP000005640">
    <property type="component" value="Chromosome 15"/>
</dbReference>
<dbReference type="RNAct" id="A8MQT2">
    <property type="molecule type" value="protein"/>
</dbReference>
<dbReference type="Bgee" id="ENSG00000215252">
    <property type="expression patterns" value="Expressed in body of pancreas and 94 other cell types or tissues"/>
</dbReference>
<dbReference type="ExpressionAtlas" id="A8MQT2">
    <property type="expression patterns" value="baseline and differential"/>
</dbReference>
<dbReference type="GO" id="GO:0005801">
    <property type="term" value="C:cis-Golgi network"/>
    <property type="evidence" value="ECO:0000318"/>
    <property type="project" value="GO_Central"/>
</dbReference>
<dbReference type="GO" id="GO:0005829">
    <property type="term" value="C:cytosol"/>
    <property type="evidence" value="ECO:0000314"/>
    <property type="project" value="HPA"/>
</dbReference>
<dbReference type="GO" id="GO:0005794">
    <property type="term" value="C:Golgi apparatus"/>
    <property type="evidence" value="ECO:0000314"/>
    <property type="project" value="HPA"/>
</dbReference>
<dbReference type="GO" id="GO:0000137">
    <property type="term" value="C:Golgi cis cisterna"/>
    <property type="evidence" value="ECO:0000318"/>
    <property type="project" value="GO_Central"/>
</dbReference>
<dbReference type="GO" id="GO:0032580">
    <property type="term" value="C:Golgi cisterna membrane"/>
    <property type="evidence" value="ECO:0000318"/>
    <property type="project" value="GO_Central"/>
</dbReference>
<dbReference type="GO" id="GO:0007030">
    <property type="term" value="P:Golgi organization"/>
    <property type="evidence" value="ECO:0000318"/>
    <property type="project" value="GO_Central"/>
</dbReference>
<dbReference type="InterPro" id="IPR043937">
    <property type="entry name" value="GM130_C"/>
</dbReference>
<dbReference type="InterPro" id="IPR043976">
    <property type="entry name" value="GOLGA_cons_dom"/>
</dbReference>
<dbReference type="InterPro" id="IPR024858">
    <property type="entry name" value="Golgin_A"/>
</dbReference>
<dbReference type="PANTHER" id="PTHR10881:SF63">
    <property type="entry name" value="GOLGIN SUBFAMILY A MEMBER 8B"/>
    <property type="match status" value="1"/>
</dbReference>
<dbReference type="PANTHER" id="PTHR10881">
    <property type="entry name" value="GOLGIN SUBFAMILY A MEMBER-RELATED"/>
    <property type="match status" value="1"/>
</dbReference>
<dbReference type="Pfam" id="PF19046">
    <property type="entry name" value="GM130_C"/>
    <property type="match status" value="1"/>
</dbReference>
<dbReference type="Pfam" id="PF15070">
    <property type="entry name" value="GOLGA2L5"/>
    <property type="match status" value="1"/>
</dbReference>
<organism>
    <name type="scientific">Homo sapiens</name>
    <name type="common">Human</name>
    <dbReference type="NCBI Taxonomy" id="9606"/>
    <lineage>
        <taxon>Eukaryota</taxon>
        <taxon>Metazoa</taxon>
        <taxon>Chordata</taxon>
        <taxon>Craniata</taxon>
        <taxon>Vertebrata</taxon>
        <taxon>Euteleostomi</taxon>
        <taxon>Mammalia</taxon>
        <taxon>Eutheria</taxon>
        <taxon>Euarchontoglires</taxon>
        <taxon>Primates</taxon>
        <taxon>Haplorrhini</taxon>
        <taxon>Catarrhini</taxon>
        <taxon>Hominidae</taxon>
        <taxon>Homo</taxon>
    </lineage>
</organism>
<accession>A8MQT2</accession>
<accession>A6NLZ2</accession>
<accession>O94937</accession>
<accession>Q2M3S9</accession>
<accession>Q9NZG8</accession>
<accession>Q9NZW0</accession>
<accession>Q9NZW3</accession>
<evidence type="ECO:0000250" key="1"/>
<evidence type="ECO:0000255" key="2"/>
<evidence type="ECO:0000256" key="3">
    <source>
        <dbReference type="SAM" id="MobiDB-lite"/>
    </source>
</evidence>
<evidence type="ECO:0000269" key="4">
    <source>
    </source>
</evidence>
<evidence type="ECO:0000269" key="5">
    <source>
    </source>
</evidence>
<evidence type="ECO:0000303" key="6">
    <source>
    </source>
</evidence>
<evidence type="ECO:0000303" key="7">
    <source>
    </source>
</evidence>
<evidence type="ECO:0000305" key="8"/>
<keyword id="KW-0025">Alternative splicing</keyword>
<keyword id="KW-0175">Coiled coil</keyword>
<keyword id="KW-0333">Golgi apparatus</keyword>
<keyword id="KW-0472">Membrane</keyword>
<keyword id="KW-1267">Proteomics identification</keyword>
<keyword id="KW-1185">Reference proteome</keyword>
<feature type="chain" id="PRO_0000316091" description="Golgin subfamily A member 8B">
    <location>
        <begin position="1"/>
        <end position="603"/>
    </location>
</feature>
<feature type="region of interest" description="Disordered" evidence="3">
    <location>
        <begin position="1"/>
        <end position="82"/>
    </location>
</feature>
<feature type="region of interest" description="Disordered" evidence="3">
    <location>
        <begin position="95"/>
        <end position="125"/>
    </location>
</feature>
<feature type="region of interest" description="Disordered" evidence="3">
    <location>
        <begin position="398"/>
        <end position="419"/>
    </location>
</feature>
<feature type="region of interest" description="Disordered" evidence="3">
    <location>
        <begin position="460"/>
        <end position="492"/>
    </location>
</feature>
<feature type="region of interest" description="Golgi-targeting domain">
    <location>
        <begin position="491"/>
        <end position="603"/>
    </location>
</feature>
<feature type="coiled-coil region" evidence="2">
    <location>
        <begin position="82"/>
        <end position="173"/>
    </location>
</feature>
<feature type="coiled-coil region" evidence="2">
    <location>
        <begin position="212"/>
        <end position="440"/>
    </location>
</feature>
<feature type="compositionally biased region" description="Low complexity" evidence="3">
    <location>
        <begin position="46"/>
        <end position="66"/>
    </location>
</feature>
<feature type="compositionally biased region" description="Polar residues" evidence="3">
    <location>
        <begin position="69"/>
        <end position="82"/>
    </location>
</feature>
<feature type="compositionally biased region" description="Basic and acidic residues" evidence="3">
    <location>
        <begin position="100"/>
        <end position="124"/>
    </location>
</feature>
<feature type="compositionally biased region" description="Gly residues" evidence="3">
    <location>
        <begin position="469"/>
        <end position="482"/>
    </location>
</feature>
<feature type="splice variant" id="VSP_030496" description="In isoform 2." evidence="6 7">
    <location>
        <begin position="1"/>
        <end position="143"/>
    </location>
</feature>
<feature type="sequence conflict" description="In Ref. 2; AAF34136." evidence="8" ref="2">
    <original>A</original>
    <variation>T</variation>
    <location>
        <position position="181"/>
    </location>
</feature>
<feature type="sequence conflict" description="In Ref. 1; AAF40308, 2; AAF34136 and 4; AAI04801." evidence="8" ref="1 2 4">
    <original>R</original>
    <variation>Q</variation>
    <location>
        <position position="352"/>
    </location>
</feature>
<feature type="sequence conflict" description="In Ref. 1; AAF40308." evidence="8" ref="1">
    <original>A</original>
    <variation>S</variation>
    <location>
        <position position="360"/>
    </location>
</feature>
<feature type="sequence conflict" description="In Ref. 1; AAF40308." evidence="8" ref="1">
    <location>
        <position position="370"/>
    </location>
</feature>
<feature type="sequence conflict" description="In Ref. 1; AAF40308, 2; AAF34136 and 4; AAI04801." evidence="8" ref="1 2 4">
    <original>M</original>
    <variation>T</variation>
    <location>
        <position position="394"/>
    </location>
</feature>
<feature type="sequence conflict" description="In Ref. 1; AAF40308 and 4; AAI04801." evidence="8" ref="1 4">
    <original>A</original>
    <variation>V</variation>
    <location>
        <position position="428"/>
    </location>
</feature>
<feature type="sequence conflict" description="In Ref. 2; AAF34136." evidence="8" ref="2">
    <original>K</original>
    <variation>N</variation>
    <location>
        <position position="452"/>
    </location>
</feature>
<feature type="sequence conflict" description="In Ref. 2; AAF34136." evidence="8" ref="2">
    <original>S</original>
    <variation>A</variation>
    <location>
        <position position="468"/>
    </location>
</feature>
<feature type="sequence conflict" description="In Ref. 1; AAF40308, 2; AAF34136 and 4; AAI04801." evidence="8" ref="1 2 4">
    <original>Q</original>
    <variation>R</variation>
    <location>
        <position position="480"/>
    </location>
</feature>
<feature type="sequence conflict" description="In Ref. 1; AAF40308, 2; AAF34136 and 4; AAI04801." evidence="8" ref="1 2 4">
    <original>A</original>
    <variation>V</variation>
    <location>
        <position position="488"/>
    </location>
</feature>
<feature type="sequence conflict" description="In Ref. 2; AAF34136." evidence="8" ref="2">
    <original>D</original>
    <variation>N</variation>
    <location>
        <position position="493"/>
    </location>
</feature>
<feature type="sequence conflict" description="In Ref. 1; AAF40308 and 2; AAF34136." evidence="8" ref="1 2">
    <original>L</original>
    <variation>V</variation>
    <location>
        <position position="569"/>
    </location>
</feature>
<sequence length="603" mass="67278">MAEETGQSKLAAAKKKFKEYWQRNRPGVPAAAKRNTKANGSSPETAASGGCHSSEASSSASSSLHARQSPCQEQAAVLNSRSIKISRLNDTIKSLKQQKKQVEHQLEEEKKANNEKQKAERELEGQIQRLNTEKKKLNTDLYHMKHSLRYFEEESKDLAGRLQRSSQRIGELEWSLCAVAATQKKKPDGFSSRSKALLKRQLEQSIREQILLKGHVTQLKESLKEVQLERDQYAEQIKGERAQWQQRMRKMSQEVCTLKEEKKHDTHRVEELERSLSRLKNQMAEPLPPDAPAVSSEVELQDLRKELERVAGELQAQVENNQCISLLNRGQKERLREQEERLQEQQERLREREKRLQQLAEPQSDLEELKHENKSALQLEQQVKELQEKLGQVMETLTSAEKEPEAAVPASGTGGESSGLMDLLEEKADLREHVEKLELGFIQYRRERCHQKVHRLLTEPGDSAKDASPGGGHHQAGPGQGGEEGEAAGAAGDGVAACGSYSEGHGKFLAAARNPAAEPSPGAPAPQELGAADKHGDLCEASLTNSVEPAQGEAREGSSQDNPTAQPVLQLLGEMQDHQEHPGLGSNCCVPCFCWAWLPRRRR</sequence>
<comment type="function">
    <text evidence="1">May be involved in maintaining Golgi structure.</text>
</comment>
<comment type="subcellular location">
    <subcellularLocation>
        <location evidence="5">Golgi apparatus</location>
        <location evidence="5">Golgi stack membrane</location>
        <topology evidence="5">Peripheral membrane protein</topology>
    </subcellularLocation>
</comment>
<comment type="alternative products">
    <event type="alternative splicing"/>
    <isoform>
        <id>A8MQT2-1</id>
        <name>1</name>
        <sequence type="displayed"/>
    </isoform>
    <isoform>
        <id>A8MQT2-2</id>
        <name>2</name>
        <sequence type="described" ref="VSP_030496"/>
    </isoform>
</comment>
<comment type="tissue specificity">
    <text evidence="4">Highly expressed in brain, heart and kidney. Detected at lower levels in liver, thymus, spleen, lung and peripheral blood leukocytes.</text>
</comment>
<comment type="domain">
    <text>Extended rod-like protein with coiled-coil domains.</text>
</comment>
<comment type="miscellaneous">
    <text>Antibodies against GM88 are present in serum from a patient with Sjoegren syndrome. Sera from patients with Sjoegren syndrome often contain antibodies that react with normal components of the Golgi complex.</text>
</comment>
<comment type="similarity">
    <text evidence="8">Belongs to the GOLGA8 family.</text>
</comment>
<comment type="caution">
    <text evidence="8">A family of highly similar proteins (GOLGA8A, GOLGA8B, GOLGA8C, GOLGA8D, GOLGA8E, GOLGA8F, GOLGA8G) are encoded by a repeated region on chromosome 15q11-15q13. Our sequences are in agreement with HGNC nomenclature.</text>
</comment>
<proteinExistence type="evidence at protein level"/>
<reference key="1">
    <citation type="journal article" date="2000" name="J. Autoimmun.">
        <title>Human autoantibodies to a novel Golgi protein golgin-67: high similarity with golgin-95/gm 130 autoantigen.</title>
        <authorList>
            <person name="Eystathioy T."/>
            <person name="Jakymiw A."/>
            <person name="Fujita D.J."/>
            <person name="Fritzler M.J."/>
            <person name="Chan E.K.L."/>
        </authorList>
    </citation>
    <scope>NUCLEOTIDE SEQUENCE [MRNA] (ISOFORM 2)</scope>
    <scope>ROLE IN AUTOIMMUNE DISEASES</scope>
    <scope>SUBCELLULAR LOCATION</scope>
</reference>
<reference key="2">
    <citation type="journal article" date="2000" name="J. Biol. Chem.">
        <title>Identification and characterization of a novel Golgi protein, golgin-67.</title>
        <authorList>
            <person name="Jakymiw A."/>
            <person name="Raharjo E."/>
            <person name="Rattner J.B."/>
            <person name="Eystathioy T."/>
            <person name="Chan E.K.L."/>
            <person name="Fujita D.J."/>
        </authorList>
    </citation>
    <scope>NUCLEOTIDE SEQUENCE [MRNA] (ISOFORM 2)</scope>
    <scope>TISSUE SPECIFICITY</scope>
    <source>
        <tissue>Leukemic T-cell</tissue>
    </source>
</reference>
<reference key="3">
    <citation type="journal article" date="2006" name="Nature">
        <title>Analysis of the DNA sequence and duplication history of human chromosome 15.</title>
        <authorList>
            <person name="Zody M.C."/>
            <person name="Garber M."/>
            <person name="Sharpe T."/>
            <person name="Young S.K."/>
            <person name="Rowen L."/>
            <person name="O'Neill K."/>
            <person name="Whittaker C.A."/>
            <person name="Kamal M."/>
            <person name="Chang J.L."/>
            <person name="Cuomo C.A."/>
            <person name="Dewar K."/>
            <person name="FitzGerald M.G."/>
            <person name="Kodira C.D."/>
            <person name="Madan A."/>
            <person name="Qin S."/>
            <person name="Yang X."/>
            <person name="Abbasi N."/>
            <person name="Abouelleil A."/>
            <person name="Arachchi H.M."/>
            <person name="Baradarani L."/>
            <person name="Birditt B."/>
            <person name="Bloom S."/>
            <person name="Bloom T."/>
            <person name="Borowsky M.L."/>
            <person name="Burke J."/>
            <person name="Butler J."/>
            <person name="Cook A."/>
            <person name="DeArellano K."/>
            <person name="DeCaprio D."/>
            <person name="Dorris L. III"/>
            <person name="Dors M."/>
            <person name="Eichler E.E."/>
            <person name="Engels R."/>
            <person name="Fahey J."/>
            <person name="Fleetwood P."/>
            <person name="Friedman C."/>
            <person name="Gearin G."/>
            <person name="Hall J.L."/>
            <person name="Hensley G."/>
            <person name="Johnson E."/>
            <person name="Jones C."/>
            <person name="Kamat A."/>
            <person name="Kaur A."/>
            <person name="Locke D.P."/>
            <person name="Madan A."/>
            <person name="Munson G."/>
            <person name="Jaffe D.B."/>
            <person name="Lui A."/>
            <person name="Macdonald P."/>
            <person name="Mauceli E."/>
            <person name="Naylor J.W."/>
            <person name="Nesbitt R."/>
            <person name="Nicol R."/>
            <person name="O'Leary S.B."/>
            <person name="Ratcliffe A."/>
            <person name="Rounsley S."/>
            <person name="She X."/>
            <person name="Sneddon K.M.B."/>
            <person name="Stewart S."/>
            <person name="Sougnez C."/>
            <person name="Stone S.M."/>
            <person name="Topham K."/>
            <person name="Vincent D."/>
            <person name="Wang S."/>
            <person name="Zimmer A.R."/>
            <person name="Birren B.W."/>
            <person name="Hood L."/>
            <person name="Lander E.S."/>
            <person name="Nusbaum C."/>
        </authorList>
    </citation>
    <scope>NUCLEOTIDE SEQUENCE [LARGE SCALE GENOMIC DNA]</scope>
</reference>
<reference key="4">
    <citation type="journal article" date="2004" name="Genome Res.">
        <title>The status, quality, and expansion of the NIH full-length cDNA project: the Mammalian Gene Collection (MGC).</title>
        <authorList>
            <consortium name="The MGC Project Team"/>
        </authorList>
    </citation>
    <scope>NUCLEOTIDE SEQUENCE [LARGE SCALE MRNA] (ISOFORM 1)</scope>
    <source>
        <tissue>Brain</tissue>
    </source>
</reference>
<gene>
    <name type="primary">GOLGA8B</name>
</gene>